<proteinExistence type="evidence at transcript level"/>
<feature type="chain" id="PRO_0000289798" description="Fumarylacetoacetate hydrolase domain-containing protein 2">
    <location>
        <begin position="1"/>
        <end position="314"/>
    </location>
</feature>
<feature type="binding site" evidence="3">
    <location>
        <position position="159"/>
    </location>
    <ligand>
        <name>a divalent metal cation</name>
        <dbReference type="ChEBI" id="CHEBI:60240"/>
    </ligand>
</feature>
<feature type="binding site" evidence="3">
    <location>
        <position position="161"/>
    </location>
    <ligand>
        <name>a divalent metal cation</name>
        <dbReference type="ChEBI" id="CHEBI:60240"/>
    </ligand>
</feature>
<feature type="binding site" evidence="3">
    <location>
        <position position="190"/>
    </location>
    <ligand>
        <name>a divalent metal cation</name>
        <dbReference type="ChEBI" id="CHEBI:60240"/>
    </ligand>
</feature>
<feature type="modified residue" description="N6-acetyllysine; alternate" evidence="2">
    <location>
        <position position="203"/>
    </location>
</feature>
<feature type="modified residue" description="N6-succinyllysine; alternate" evidence="2">
    <location>
        <position position="203"/>
    </location>
</feature>
<feature type="modified residue" description="N6-acetyllysine" evidence="2">
    <location>
        <position position="234"/>
    </location>
</feature>
<comment type="function">
    <text evidence="1">May have hydrolase activity.</text>
</comment>
<comment type="cofactor">
    <cofactor evidence="4">
        <name>Ca(2+)</name>
        <dbReference type="ChEBI" id="CHEBI:29108"/>
    </cofactor>
</comment>
<comment type="cofactor">
    <cofactor evidence="4">
        <name>Mg(2+)</name>
        <dbReference type="ChEBI" id="CHEBI:18420"/>
    </cofactor>
</comment>
<comment type="similarity">
    <text evidence="4">Belongs to the FAH family.</text>
</comment>
<keyword id="KW-0007">Acetylation</keyword>
<keyword id="KW-0106">Calcium</keyword>
<keyword id="KW-0378">Hydrolase</keyword>
<keyword id="KW-0460">Magnesium</keyword>
<keyword id="KW-0479">Metal-binding</keyword>
<keyword id="KW-1185">Reference proteome</keyword>
<organism>
    <name type="scientific">Pongo abelii</name>
    <name type="common">Sumatran orangutan</name>
    <name type="synonym">Pongo pygmaeus abelii</name>
    <dbReference type="NCBI Taxonomy" id="9601"/>
    <lineage>
        <taxon>Eukaryota</taxon>
        <taxon>Metazoa</taxon>
        <taxon>Chordata</taxon>
        <taxon>Craniata</taxon>
        <taxon>Vertebrata</taxon>
        <taxon>Euteleostomi</taxon>
        <taxon>Mammalia</taxon>
        <taxon>Eutheria</taxon>
        <taxon>Euarchontoglires</taxon>
        <taxon>Primates</taxon>
        <taxon>Haplorrhini</taxon>
        <taxon>Catarrhini</taxon>
        <taxon>Hominidae</taxon>
        <taxon>Pongo</taxon>
    </lineage>
</organism>
<reference key="1">
    <citation type="submission" date="2004-11" db="EMBL/GenBank/DDBJ databases">
        <authorList>
            <consortium name="The German cDNA consortium"/>
        </authorList>
    </citation>
    <scope>NUCLEOTIDE SEQUENCE [LARGE SCALE MRNA]</scope>
    <source>
        <tissue>Heart</tissue>
    </source>
</reference>
<dbReference type="EC" id="3.-.-.-"/>
<dbReference type="EMBL" id="CR858143">
    <property type="protein sequence ID" value="CAH90382.1"/>
    <property type="molecule type" value="mRNA"/>
</dbReference>
<dbReference type="RefSeq" id="NP_001125186.1">
    <property type="nucleotide sequence ID" value="NM_001131714.1"/>
</dbReference>
<dbReference type="SMR" id="Q5RCX5"/>
<dbReference type="FunCoup" id="Q5RCX5">
    <property type="interactions" value="347"/>
</dbReference>
<dbReference type="STRING" id="9601.ENSPPYP00000024293"/>
<dbReference type="GeneID" id="100172076"/>
<dbReference type="KEGG" id="pon:100172076"/>
<dbReference type="CTD" id="51011"/>
<dbReference type="eggNOG" id="KOG1535">
    <property type="taxonomic scope" value="Eukaryota"/>
</dbReference>
<dbReference type="InParanoid" id="Q5RCX5"/>
<dbReference type="OrthoDB" id="411064at2759"/>
<dbReference type="Proteomes" id="UP000001595">
    <property type="component" value="Unplaced"/>
</dbReference>
<dbReference type="GO" id="GO:0016787">
    <property type="term" value="F:hydrolase activity"/>
    <property type="evidence" value="ECO:0007669"/>
    <property type="project" value="UniProtKB-KW"/>
</dbReference>
<dbReference type="GO" id="GO:0046872">
    <property type="term" value="F:metal ion binding"/>
    <property type="evidence" value="ECO:0007669"/>
    <property type="project" value="UniProtKB-KW"/>
</dbReference>
<dbReference type="GO" id="GO:0044281">
    <property type="term" value="P:small molecule metabolic process"/>
    <property type="evidence" value="ECO:0007669"/>
    <property type="project" value="UniProtKB-ARBA"/>
</dbReference>
<dbReference type="FunFam" id="3.90.850.10:FF:000002">
    <property type="entry name" value="2-hydroxyhepta-2,4-diene-1,7-dioate isomerase"/>
    <property type="match status" value="1"/>
</dbReference>
<dbReference type="Gene3D" id="3.90.850.10">
    <property type="entry name" value="Fumarylacetoacetase-like, C-terminal domain"/>
    <property type="match status" value="1"/>
</dbReference>
<dbReference type="InterPro" id="IPR051121">
    <property type="entry name" value="FAH"/>
</dbReference>
<dbReference type="InterPro" id="IPR011234">
    <property type="entry name" value="Fumarylacetoacetase-like_C"/>
</dbReference>
<dbReference type="InterPro" id="IPR036663">
    <property type="entry name" value="Fumarylacetoacetase_C_sf"/>
</dbReference>
<dbReference type="PANTHER" id="PTHR42796:SF4">
    <property type="entry name" value="FUMARYLACETOACETATE HYDROLASE DOMAIN-CONTAINING PROTEIN 2A"/>
    <property type="match status" value="1"/>
</dbReference>
<dbReference type="PANTHER" id="PTHR42796">
    <property type="entry name" value="FUMARYLACETOACETATE HYDROLASE DOMAIN-CONTAINING PROTEIN 2A-RELATED"/>
    <property type="match status" value="1"/>
</dbReference>
<dbReference type="Pfam" id="PF01557">
    <property type="entry name" value="FAA_hydrolase"/>
    <property type="match status" value="1"/>
</dbReference>
<dbReference type="SUPFAM" id="SSF56529">
    <property type="entry name" value="FAH"/>
    <property type="match status" value="1"/>
</dbReference>
<gene>
    <name type="primary">FAHD2</name>
</gene>
<protein>
    <recommendedName>
        <fullName>Fumarylacetoacetate hydrolase domain-containing protein 2</fullName>
        <ecNumber>3.-.-.-</ecNumber>
    </recommendedName>
</protein>
<name>FAHD2_PONAB</name>
<evidence type="ECO:0000250" key="1"/>
<evidence type="ECO:0000250" key="2">
    <source>
        <dbReference type="UniProtKB" id="Q3TC72"/>
    </source>
</evidence>
<evidence type="ECO:0000250" key="3">
    <source>
        <dbReference type="UniProtKB" id="Q6P587"/>
    </source>
</evidence>
<evidence type="ECO:0000305" key="4"/>
<accession>Q5RCX5</accession>
<sequence length="314" mass="34745">MLVSGRRRLLTALLQARKWPFQPSRDMRLVQFQAPHLVGPHLGLETGNGGGVINLNAFDPTLPKTMTQFLEQGEATLSVARRALAAQLPVLPRSEVTFLAPVTRPDKVVCVRMNYVDHCKEQNVPVPKEPFIFSKFASSIVGPYDEVVLPPQSQEVDWEVELAVVIGKKGKHIKATDAMAHVAGFTVAHDVSARDWQMRRNGKQWLLGKTFDTFCPLGPALVTKDSVADPHNLKICCRVNGELVQSSNTNQMVFKTEDLIAWVSQFVTFYPGDVILTGTPPGVGVFRKPPVFLKKGDEVQCEIEELGVIINKVV</sequence>